<accession>Q5WLA2</accession>
<protein>
    <recommendedName>
        <fullName evidence="1">N-acetylmuramic acid 6-phosphate etherase</fullName>
        <shortName evidence="1">MurNAc-6-P etherase</shortName>
        <ecNumber evidence="1">4.2.1.126</ecNumber>
    </recommendedName>
    <alternativeName>
        <fullName evidence="1">N-acetylmuramic acid 6-phosphate hydrolase</fullName>
    </alternativeName>
    <alternativeName>
        <fullName evidence="1">N-acetylmuramic acid 6-phosphate lyase</fullName>
    </alternativeName>
</protein>
<organism>
    <name type="scientific">Shouchella clausii (strain KSM-K16)</name>
    <name type="common">Alkalihalobacillus clausii</name>
    <dbReference type="NCBI Taxonomy" id="66692"/>
    <lineage>
        <taxon>Bacteria</taxon>
        <taxon>Bacillati</taxon>
        <taxon>Bacillota</taxon>
        <taxon>Bacilli</taxon>
        <taxon>Bacillales</taxon>
        <taxon>Bacillaceae</taxon>
        <taxon>Shouchella</taxon>
    </lineage>
</organism>
<proteinExistence type="inferred from homology"/>
<keyword id="KW-0119">Carbohydrate metabolism</keyword>
<keyword id="KW-0456">Lyase</keyword>
<keyword id="KW-1185">Reference proteome</keyword>
<name>MURQ_SHOC1</name>
<gene>
    <name evidence="1" type="primary">murQ</name>
    <name type="ordered locus">ABC0311</name>
</gene>
<evidence type="ECO:0000255" key="1">
    <source>
        <dbReference type="HAMAP-Rule" id="MF_00068"/>
    </source>
</evidence>
<sequence>MIDKLKTETRNQATMALDSMPIHDILKAMNREDGKVPTAIATQLPQIEKAVKLVIASFQQGGRLIYAGAGTSGRLGVLDAVECKPTFGVSPEMVRGVIAGGEQAFTEAVEGAEDDERAGANDCNRLNIGEKDTVIALAASGRTPYAIGVLKEAEARGANTVSIACNKEAKMSQYASVAIEVETGPEVLTGSTRLKAGTAQKLILNMISTTAMVGIGKVYQNLMVDVQPTNQKLVERAKRIIMEATDSTYETAADYYQKANGHVKAAIVMILLDCSYDEALTKLQNAKGFIRKTVDK</sequence>
<reference key="1">
    <citation type="submission" date="2003-10" db="EMBL/GenBank/DDBJ databases">
        <title>The complete genome sequence of the alkaliphilic Bacillus clausii KSM-K16.</title>
        <authorList>
            <person name="Takaki Y."/>
            <person name="Kageyama Y."/>
            <person name="Shimamura S."/>
            <person name="Suzuki H."/>
            <person name="Nishi S."/>
            <person name="Hatada Y."/>
            <person name="Kawai S."/>
            <person name="Ito S."/>
            <person name="Horikoshi K."/>
        </authorList>
    </citation>
    <scope>NUCLEOTIDE SEQUENCE [LARGE SCALE GENOMIC DNA]</scope>
    <source>
        <strain>KSM-K16</strain>
    </source>
</reference>
<dbReference type="EC" id="4.2.1.126" evidence="1"/>
<dbReference type="EMBL" id="AP006627">
    <property type="protein sequence ID" value="BAD62853.1"/>
    <property type="molecule type" value="Genomic_DNA"/>
</dbReference>
<dbReference type="RefSeq" id="WP_011245172.1">
    <property type="nucleotide sequence ID" value="NC_006582.1"/>
</dbReference>
<dbReference type="SMR" id="Q5WLA2"/>
<dbReference type="STRING" id="66692.ABC0311"/>
<dbReference type="KEGG" id="bcl:ABC0311"/>
<dbReference type="eggNOG" id="COG2103">
    <property type="taxonomic scope" value="Bacteria"/>
</dbReference>
<dbReference type="HOGENOM" id="CLU_049049_1_1_9"/>
<dbReference type="OrthoDB" id="9813395at2"/>
<dbReference type="UniPathway" id="UPA00342"/>
<dbReference type="Proteomes" id="UP000001168">
    <property type="component" value="Chromosome"/>
</dbReference>
<dbReference type="GO" id="GO:0097367">
    <property type="term" value="F:carbohydrate derivative binding"/>
    <property type="evidence" value="ECO:0007669"/>
    <property type="project" value="InterPro"/>
</dbReference>
<dbReference type="GO" id="GO:0016835">
    <property type="term" value="F:carbon-oxygen lyase activity"/>
    <property type="evidence" value="ECO:0007669"/>
    <property type="project" value="UniProtKB-UniRule"/>
</dbReference>
<dbReference type="GO" id="GO:0016803">
    <property type="term" value="F:ether hydrolase activity"/>
    <property type="evidence" value="ECO:0007669"/>
    <property type="project" value="TreeGrafter"/>
</dbReference>
<dbReference type="GO" id="GO:0046348">
    <property type="term" value="P:amino sugar catabolic process"/>
    <property type="evidence" value="ECO:0007669"/>
    <property type="project" value="InterPro"/>
</dbReference>
<dbReference type="GO" id="GO:0097173">
    <property type="term" value="P:N-acetylmuramic acid catabolic process"/>
    <property type="evidence" value="ECO:0007669"/>
    <property type="project" value="UniProtKB-UniPathway"/>
</dbReference>
<dbReference type="GO" id="GO:0009254">
    <property type="term" value="P:peptidoglycan turnover"/>
    <property type="evidence" value="ECO:0007669"/>
    <property type="project" value="TreeGrafter"/>
</dbReference>
<dbReference type="CDD" id="cd05007">
    <property type="entry name" value="SIS_Etherase"/>
    <property type="match status" value="1"/>
</dbReference>
<dbReference type="FunFam" id="1.10.8.1080:FF:000001">
    <property type="entry name" value="N-acetylmuramic acid 6-phosphate etherase"/>
    <property type="match status" value="1"/>
</dbReference>
<dbReference type="FunFam" id="3.40.50.10490:FF:000014">
    <property type="entry name" value="N-acetylmuramic acid 6-phosphate etherase"/>
    <property type="match status" value="1"/>
</dbReference>
<dbReference type="Gene3D" id="1.10.8.1080">
    <property type="match status" value="1"/>
</dbReference>
<dbReference type="Gene3D" id="3.40.50.10490">
    <property type="entry name" value="Glucose-6-phosphate isomerase like protein, domain 1"/>
    <property type="match status" value="1"/>
</dbReference>
<dbReference type="HAMAP" id="MF_00068">
    <property type="entry name" value="MurQ"/>
    <property type="match status" value="1"/>
</dbReference>
<dbReference type="InterPro" id="IPR005488">
    <property type="entry name" value="Etherase_MurQ"/>
</dbReference>
<dbReference type="InterPro" id="IPR005486">
    <property type="entry name" value="Glucokinase_regulatory_CS"/>
</dbReference>
<dbReference type="InterPro" id="IPR040190">
    <property type="entry name" value="MURQ/GCKR"/>
</dbReference>
<dbReference type="InterPro" id="IPR001347">
    <property type="entry name" value="SIS_dom"/>
</dbReference>
<dbReference type="InterPro" id="IPR046348">
    <property type="entry name" value="SIS_dom_sf"/>
</dbReference>
<dbReference type="NCBIfam" id="TIGR00274">
    <property type="entry name" value="N-acetylmuramic acid 6-phosphate etherase"/>
    <property type="match status" value="1"/>
</dbReference>
<dbReference type="NCBIfam" id="NF003915">
    <property type="entry name" value="PRK05441.1"/>
    <property type="match status" value="1"/>
</dbReference>
<dbReference type="NCBIfam" id="NF009222">
    <property type="entry name" value="PRK12570.1"/>
    <property type="match status" value="1"/>
</dbReference>
<dbReference type="PANTHER" id="PTHR10088">
    <property type="entry name" value="GLUCOKINASE REGULATORY PROTEIN"/>
    <property type="match status" value="1"/>
</dbReference>
<dbReference type="PANTHER" id="PTHR10088:SF4">
    <property type="entry name" value="GLUCOKINASE REGULATORY PROTEIN"/>
    <property type="match status" value="1"/>
</dbReference>
<dbReference type="Pfam" id="PF22645">
    <property type="entry name" value="GKRP_SIS_N"/>
    <property type="match status" value="1"/>
</dbReference>
<dbReference type="SUPFAM" id="SSF53697">
    <property type="entry name" value="SIS domain"/>
    <property type="match status" value="1"/>
</dbReference>
<dbReference type="PROSITE" id="PS01272">
    <property type="entry name" value="GCKR"/>
    <property type="match status" value="1"/>
</dbReference>
<dbReference type="PROSITE" id="PS51464">
    <property type="entry name" value="SIS"/>
    <property type="match status" value="1"/>
</dbReference>
<comment type="function">
    <text evidence="1">Specifically catalyzes the cleavage of the D-lactyl ether substituent of MurNAc 6-phosphate, producing GlcNAc 6-phosphate and D-lactate.</text>
</comment>
<comment type="catalytic activity">
    <reaction evidence="1">
        <text>N-acetyl-D-muramate 6-phosphate + H2O = N-acetyl-D-glucosamine 6-phosphate + (R)-lactate</text>
        <dbReference type="Rhea" id="RHEA:26410"/>
        <dbReference type="ChEBI" id="CHEBI:15377"/>
        <dbReference type="ChEBI" id="CHEBI:16004"/>
        <dbReference type="ChEBI" id="CHEBI:57513"/>
        <dbReference type="ChEBI" id="CHEBI:58722"/>
        <dbReference type="EC" id="4.2.1.126"/>
    </reaction>
</comment>
<comment type="pathway">
    <text evidence="1">Amino-sugar metabolism; N-acetylmuramate degradation.</text>
</comment>
<comment type="subunit">
    <text evidence="1">Homodimer.</text>
</comment>
<comment type="miscellaneous">
    <text evidence="1">A lyase-type mechanism (elimination/hydration) is suggested for the cleavage of the lactyl ether bond of MurNAc 6-phosphate, with the formation of an alpha,beta-unsaturated aldehyde intermediate with (E)-stereochemistry, followed by the syn addition of water to give product.</text>
</comment>
<comment type="similarity">
    <text evidence="1">Belongs to the GCKR-like family. MurNAc-6-P etherase subfamily.</text>
</comment>
<feature type="chain" id="PRO_0000249607" description="N-acetylmuramic acid 6-phosphate etherase">
    <location>
        <begin position="1"/>
        <end position="296"/>
    </location>
</feature>
<feature type="domain" description="SIS" evidence="1">
    <location>
        <begin position="54"/>
        <end position="217"/>
    </location>
</feature>
<feature type="active site" description="Proton donor" evidence="1">
    <location>
        <position position="82"/>
    </location>
</feature>
<feature type="active site" evidence="1">
    <location>
        <position position="113"/>
    </location>
</feature>